<name>FOC_BACTU</name>
<keyword id="KW-0997">Cell inner membrane</keyword>
<keyword id="KW-1003">Cell membrane</keyword>
<keyword id="KW-0472">Membrane</keyword>
<keyword id="KW-0812">Transmembrane</keyword>
<keyword id="KW-1133">Transmembrane helix</keyword>
<keyword id="KW-0813">Transport</keyword>
<dbReference type="EMBL" id="FMBI01000036">
    <property type="protein sequence ID" value="SCC52738.1"/>
    <property type="molecule type" value="Genomic_DNA"/>
</dbReference>
<dbReference type="RefSeq" id="WP_033656377.1">
    <property type="nucleotide sequence ID" value="NZ_FMBI01000036.1"/>
</dbReference>
<dbReference type="SMR" id="A0A1C4F9S9"/>
<dbReference type="Proteomes" id="UP000195991">
    <property type="component" value="Unassembled WGS sequence"/>
</dbReference>
<dbReference type="GO" id="GO:0005886">
    <property type="term" value="C:plasma membrane"/>
    <property type="evidence" value="ECO:0007669"/>
    <property type="project" value="UniProtKB-SubCell"/>
</dbReference>
<dbReference type="GO" id="GO:0015499">
    <property type="term" value="F:formate transmembrane transporter activity"/>
    <property type="evidence" value="ECO:0007669"/>
    <property type="project" value="TreeGrafter"/>
</dbReference>
<dbReference type="FunFam" id="1.20.1080.10:FF:000011">
    <property type="entry name" value="Formate family transporter"/>
    <property type="match status" value="1"/>
</dbReference>
<dbReference type="Gene3D" id="1.20.1080.10">
    <property type="entry name" value="Glycerol uptake facilitator protein"/>
    <property type="match status" value="1"/>
</dbReference>
<dbReference type="InterPro" id="IPR023271">
    <property type="entry name" value="Aquaporin-like"/>
</dbReference>
<dbReference type="InterPro" id="IPR000292">
    <property type="entry name" value="For/NO2_transpt"/>
</dbReference>
<dbReference type="InterPro" id="IPR024002">
    <property type="entry name" value="For/NO2_transpt_CS"/>
</dbReference>
<dbReference type="PANTHER" id="PTHR30520">
    <property type="entry name" value="FORMATE TRANSPORTER-RELATED"/>
    <property type="match status" value="1"/>
</dbReference>
<dbReference type="PANTHER" id="PTHR30520:SF6">
    <property type="entry name" value="FORMATE_NITRATE FAMILY TRANSPORTER (EUROFUNG)"/>
    <property type="match status" value="1"/>
</dbReference>
<dbReference type="Pfam" id="PF01226">
    <property type="entry name" value="Form_Nir_trans"/>
    <property type="match status" value="1"/>
</dbReference>
<dbReference type="PROSITE" id="PS01005">
    <property type="entry name" value="FORMATE_NITRITE_TP_1"/>
    <property type="match status" value="1"/>
</dbReference>
<dbReference type="PROSITE" id="PS01006">
    <property type="entry name" value="FORMATE_NITRITE_TP_2"/>
    <property type="match status" value="1"/>
</dbReference>
<reference evidence="7" key="1">
    <citation type="submission" date="2016-08" db="EMBL/GenBank/DDBJ databases">
        <authorList>
            <person name="Loux V."/>
            <person name="Rue O."/>
        </authorList>
    </citation>
    <scope>NUCLEOTIDE SEQUENCE [LARGE SCALE GENOMIC DNA]</scope>
    <source>
        <strain>IEBC_T61001</strain>
    </source>
</reference>
<reference evidence="5" key="2">
    <citation type="journal article" date="2019" name="J. Biol. Chem.">
        <title>Formate-nitrite transporters carrying nonprotonatable amide amino acids instead of a central histidine maintain pH-dependent transport.</title>
        <authorList>
            <person name="Helmstetter F."/>
            <person name="Arnold P."/>
            <person name="Hoeger B."/>
            <person name="Petersen L.M."/>
            <person name="Beitz E."/>
        </authorList>
    </citation>
    <scope>FUNCTION</scope>
</reference>
<feature type="chain" id="PRO_0000461323" description="Formate channel BtFdhC">
    <location>
        <begin position="1"/>
        <end position="259"/>
    </location>
</feature>
<feature type="topological domain" description="Cytoplasmic" evidence="1">
    <location>
        <begin position="1"/>
        <end position="26"/>
    </location>
</feature>
<feature type="transmembrane region" description="Helical" evidence="2">
    <location>
        <begin position="27"/>
        <end position="47"/>
    </location>
</feature>
<feature type="topological domain" description="Periplasmic" evidence="1">
    <location>
        <begin position="48"/>
        <end position="66"/>
    </location>
</feature>
<feature type="transmembrane region" description="Helical" evidence="2">
    <location>
        <begin position="67"/>
        <end position="97"/>
    </location>
</feature>
<feature type="topological domain" description="Cytoplasmic" evidence="1">
    <location>
        <begin position="98"/>
        <end position="108"/>
    </location>
</feature>
<feature type="transmembrane region" description="Helical" evidence="2">
    <location>
        <begin position="109"/>
        <end position="130"/>
    </location>
</feature>
<feature type="topological domain" description="Periplasmic" evidence="1">
    <location>
        <begin position="131"/>
        <end position="157"/>
    </location>
</feature>
<feature type="transmembrane region" description="Helical" evidence="2">
    <location>
        <begin position="158"/>
        <end position="176"/>
    </location>
</feature>
<feature type="topological domain" description="Cytoplasmic" evidence="1">
    <location>
        <begin position="177"/>
        <end position="187"/>
    </location>
</feature>
<feature type="transmembrane region" description="Helical" evidence="2">
    <location>
        <begin position="188"/>
        <end position="216"/>
    </location>
</feature>
<feature type="topological domain" description="Periplasmic" evidence="1">
    <location>
        <begin position="217"/>
        <end position="227"/>
    </location>
</feature>
<feature type="transmembrane region" description="Helical" evidence="2">
    <location>
        <begin position="228"/>
        <end position="250"/>
    </location>
</feature>
<feature type="topological domain" description="Cytoplasmic" evidence="1">
    <location>
        <begin position="251"/>
        <end position="259"/>
    </location>
</feature>
<comment type="function">
    <text evidence="3">Acts as a formate transporter.</text>
</comment>
<comment type="catalytic activity">
    <reaction evidence="1">
        <text>formate(in) = formate(out)</text>
        <dbReference type="Rhea" id="RHEA:29679"/>
        <dbReference type="ChEBI" id="CHEBI:15740"/>
    </reaction>
</comment>
<comment type="subcellular location">
    <subcellularLocation>
        <location evidence="1">Cell inner membrane</location>
        <topology evidence="2">Multi-pass membrane protein</topology>
    </subcellularLocation>
</comment>
<comment type="similarity">
    <text evidence="5">Belongs to the FNT transporter (TC 1.A.16) family.</text>
</comment>
<gene>
    <name evidence="6" type="ORF">BTT61001_04088</name>
</gene>
<protein>
    <recommendedName>
        <fullName evidence="5">Formate channel BtFdhC</fullName>
        <shortName evidence="4">BtFdhC</shortName>
    </recommendedName>
</protein>
<evidence type="ECO:0000250" key="1">
    <source>
        <dbReference type="UniProtKB" id="P0AC25"/>
    </source>
</evidence>
<evidence type="ECO:0000255" key="2"/>
<evidence type="ECO:0000269" key="3">
    <source>
    </source>
</evidence>
<evidence type="ECO:0000303" key="4">
    <source>
    </source>
</evidence>
<evidence type="ECO:0000305" key="5"/>
<evidence type="ECO:0000312" key="6">
    <source>
        <dbReference type="EMBL" id="SCC52738.1"/>
    </source>
</evidence>
<evidence type="ECO:0000312" key="7">
    <source>
        <dbReference type="Proteomes" id="UP000195991"/>
    </source>
</evidence>
<proteinExistence type="inferred from homology"/>
<sequence>MAFHKPEQIAELVIEAGVQKVSQTLPAMLILGFLGGAFISLGFLLNIRVLGNLPERWGSLVNVLGGAVFPVGLMLVVLAGGELITGNMMSLSMALYAKKITLVSVLNNWVWITFMNFVGAIFVAYCFGHLGGLTEGDYLNKTVAIAEGKLHESFGRTLILAIGCNWLVCLALWLAYGTSDFVGKIIGIWIPIMAFVVIGFQQVVANMFVISAVIFAGHLTWMDLARNFVPVFIGNVIGGAGFVGFAYFACYQKQHSNMK</sequence>
<organism evidence="7">
    <name type="scientific">Bacillus thuringiensis</name>
    <dbReference type="NCBI Taxonomy" id="1428"/>
    <lineage>
        <taxon>Bacteria</taxon>
        <taxon>Bacillati</taxon>
        <taxon>Bacillota</taxon>
        <taxon>Bacilli</taxon>
        <taxon>Bacillales</taxon>
        <taxon>Bacillaceae</taxon>
        <taxon>Bacillus</taxon>
        <taxon>Bacillus cereus group</taxon>
    </lineage>
</organism>
<accession>A0A1C4F9S9</accession>